<keyword id="KW-0520">NAD</keyword>
<keyword id="KW-0560">Oxidoreductase</keyword>
<organism>
    <name type="scientific">Staphylococcus aureus (strain N315)</name>
    <dbReference type="NCBI Taxonomy" id="158879"/>
    <lineage>
        <taxon>Bacteria</taxon>
        <taxon>Bacillati</taxon>
        <taxon>Bacillota</taxon>
        <taxon>Bacilli</taxon>
        <taxon>Bacillales</taxon>
        <taxon>Staphylococcaceae</taxon>
        <taxon>Staphylococcus</taxon>
    </lineage>
</organism>
<accession>P99151</accession>
<accession>Q99U49</accession>
<sequence length="372" mass="40235">MLVAVVKELKQGEGRVACTPENVRKLTDAGHKVIVEKNAGIGSGFSNDMYEKEGAKIVTHEQAWEADLVIKVKEPHESEYQYFKKNQIIWGFLHLASSKEIVEKMQEVGVTAISGETIIKNGKAELLAPMSAIAGQRSAIMGAYYSEAQHGGQGTLVTGVHENVDIPGSTYVIFGGGVAATNAANVALGLNAKVIIIELNDDRIKYLEDMYAEKDVTVVKSTPENLAEQIKKADVFISTILIPGAKPPKLVTREMVKSMKKGSVLIDIAIDQGGTIETIRPTTISDPVYEEEGVIHYGVPNQPGAVPRTSTMALAQGNIDYILEICDKGLEQAIKDNEALSTGVNIYQGQVTNQGLASSHDLDYKEILNVIE</sequence>
<proteinExistence type="evidence at protein level"/>
<feature type="chain" id="PRO_0000198997" description="Alanine dehydrogenase 1">
    <location>
        <begin position="1"/>
        <end position="372"/>
    </location>
</feature>
<feature type="active site" evidence="2">
    <location>
        <position position="94"/>
    </location>
</feature>
<feature type="binding site" evidence="1">
    <location>
        <begin position="170"/>
        <end position="200"/>
    </location>
    <ligand>
        <name>NAD(+)</name>
        <dbReference type="ChEBI" id="CHEBI:57540"/>
    </ligand>
</feature>
<name>DHA1_STAAN</name>
<dbReference type="EC" id="1.4.1.1"/>
<dbReference type="EMBL" id="BA000018">
    <property type="protein sequence ID" value="BAB42532.1"/>
    <property type="molecule type" value="Genomic_DNA"/>
</dbReference>
<dbReference type="PIR" id="G89921">
    <property type="entry name" value="G89921"/>
</dbReference>
<dbReference type="SMR" id="P99151"/>
<dbReference type="EnsemblBacteria" id="BAB42532">
    <property type="protein sequence ID" value="BAB42532"/>
    <property type="gene ID" value="BAB42532"/>
</dbReference>
<dbReference type="KEGG" id="sau:SA1272"/>
<dbReference type="HOGENOM" id="CLU_003376_3_0_9"/>
<dbReference type="UniPathway" id="UPA00527">
    <property type="reaction ID" value="UER00585"/>
</dbReference>
<dbReference type="GO" id="GO:0005886">
    <property type="term" value="C:plasma membrane"/>
    <property type="evidence" value="ECO:0007669"/>
    <property type="project" value="TreeGrafter"/>
</dbReference>
<dbReference type="GO" id="GO:0000286">
    <property type="term" value="F:alanine dehydrogenase activity"/>
    <property type="evidence" value="ECO:0007669"/>
    <property type="project" value="UniProtKB-EC"/>
</dbReference>
<dbReference type="GO" id="GO:0042853">
    <property type="term" value="P:L-alanine catabolic process"/>
    <property type="evidence" value="ECO:0007669"/>
    <property type="project" value="UniProtKB-UniPathway"/>
</dbReference>
<dbReference type="CDD" id="cd05305">
    <property type="entry name" value="L-AlaDH"/>
    <property type="match status" value="1"/>
</dbReference>
<dbReference type="FunFam" id="3.40.50.720:FF:000433">
    <property type="entry name" value="Alanine dehydrogenase 1"/>
    <property type="match status" value="1"/>
</dbReference>
<dbReference type="Gene3D" id="3.40.50.720">
    <property type="entry name" value="NAD(P)-binding Rossmann-like Domain"/>
    <property type="match status" value="2"/>
</dbReference>
<dbReference type="InterPro" id="IPR008141">
    <property type="entry name" value="Ala_DH"/>
</dbReference>
<dbReference type="InterPro" id="IPR008143">
    <property type="entry name" value="Ala_DH/PNT_CS2"/>
</dbReference>
<dbReference type="InterPro" id="IPR008142">
    <property type="entry name" value="AlaDH/PNT_CS1"/>
</dbReference>
<dbReference type="InterPro" id="IPR007886">
    <property type="entry name" value="AlaDH/PNT_N"/>
</dbReference>
<dbReference type="InterPro" id="IPR007698">
    <property type="entry name" value="AlaDH/PNT_NAD(H)-bd"/>
</dbReference>
<dbReference type="InterPro" id="IPR036291">
    <property type="entry name" value="NAD(P)-bd_dom_sf"/>
</dbReference>
<dbReference type="NCBIfam" id="TIGR00518">
    <property type="entry name" value="alaDH"/>
    <property type="match status" value="1"/>
</dbReference>
<dbReference type="PANTHER" id="PTHR42795">
    <property type="entry name" value="ALANINE DEHYDROGENASE"/>
    <property type="match status" value="1"/>
</dbReference>
<dbReference type="PANTHER" id="PTHR42795:SF1">
    <property type="entry name" value="ALANINE DEHYDROGENASE"/>
    <property type="match status" value="1"/>
</dbReference>
<dbReference type="Pfam" id="PF01262">
    <property type="entry name" value="AlaDh_PNT_C"/>
    <property type="match status" value="1"/>
</dbReference>
<dbReference type="Pfam" id="PF05222">
    <property type="entry name" value="AlaDh_PNT_N"/>
    <property type="match status" value="1"/>
</dbReference>
<dbReference type="PIRSF" id="PIRSF000183">
    <property type="entry name" value="Alanine_dh"/>
    <property type="match status" value="1"/>
</dbReference>
<dbReference type="SMART" id="SM01002">
    <property type="entry name" value="AlaDh_PNT_C"/>
    <property type="match status" value="1"/>
</dbReference>
<dbReference type="SMART" id="SM01003">
    <property type="entry name" value="AlaDh_PNT_N"/>
    <property type="match status" value="1"/>
</dbReference>
<dbReference type="SUPFAM" id="SSF52283">
    <property type="entry name" value="Formate/glycerate dehydrogenase catalytic domain-like"/>
    <property type="match status" value="1"/>
</dbReference>
<dbReference type="SUPFAM" id="SSF51735">
    <property type="entry name" value="NAD(P)-binding Rossmann-fold domains"/>
    <property type="match status" value="1"/>
</dbReference>
<dbReference type="PROSITE" id="PS00836">
    <property type="entry name" value="ALADH_PNT_1"/>
    <property type="match status" value="1"/>
</dbReference>
<dbReference type="PROSITE" id="PS00837">
    <property type="entry name" value="ALADH_PNT_2"/>
    <property type="match status" value="1"/>
</dbReference>
<reference key="1">
    <citation type="journal article" date="2001" name="Lancet">
        <title>Whole genome sequencing of meticillin-resistant Staphylococcus aureus.</title>
        <authorList>
            <person name="Kuroda M."/>
            <person name="Ohta T."/>
            <person name="Uchiyama I."/>
            <person name="Baba T."/>
            <person name="Yuzawa H."/>
            <person name="Kobayashi I."/>
            <person name="Cui L."/>
            <person name="Oguchi A."/>
            <person name="Aoki K."/>
            <person name="Nagai Y."/>
            <person name="Lian J.-Q."/>
            <person name="Ito T."/>
            <person name="Kanamori M."/>
            <person name="Matsumaru H."/>
            <person name="Maruyama A."/>
            <person name="Murakami H."/>
            <person name="Hosoyama A."/>
            <person name="Mizutani-Ui Y."/>
            <person name="Takahashi N.K."/>
            <person name="Sawano T."/>
            <person name="Inoue R."/>
            <person name="Kaito C."/>
            <person name="Sekimizu K."/>
            <person name="Hirakawa H."/>
            <person name="Kuhara S."/>
            <person name="Goto S."/>
            <person name="Yabuzaki J."/>
            <person name="Kanehisa M."/>
            <person name="Yamashita A."/>
            <person name="Oshima K."/>
            <person name="Furuya K."/>
            <person name="Yoshino C."/>
            <person name="Shiba T."/>
            <person name="Hattori M."/>
            <person name="Ogasawara N."/>
            <person name="Hayashi H."/>
            <person name="Hiramatsu K."/>
        </authorList>
    </citation>
    <scope>NUCLEOTIDE SEQUENCE [LARGE SCALE GENOMIC DNA]</scope>
    <source>
        <strain>N315</strain>
    </source>
</reference>
<reference key="2">
    <citation type="journal article" date="2005" name="J. Microbiol. Methods">
        <title>Correlation of proteomic and transcriptomic profiles of Staphylococcus aureus during the post-exponential phase of growth.</title>
        <authorList>
            <person name="Scherl A."/>
            <person name="Francois P."/>
            <person name="Bento M."/>
            <person name="Deshusses J.M."/>
            <person name="Charbonnier Y."/>
            <person name="Converset V."/>
            <person name="Huyghe A."/>
            <person name="Walter N."/>
            <person name="Hoogland C."/>
            <person name="Appel R.D."/>
            <person name="Sanchez J.-C."/>
            <person name="Zimmermann-Ivol C.G."/>
            <person name="Corthals G.L."/>
            <person name="Hochstrasser D.F."/>
            <person name="Schrenzel J."/>
        </authorList>
    </citation>
    <scope>IDENTIFICATION BY MASS SPECTROMETRY</scope>
    <source>
        <strain>N315</strain>
    </source>
</reference>
<reference key="3">
    <citation type="submission" date="2007-10" db="UniProtKB">
        <title>Shotgun proteomic analysis of total and membrane protein extracts of S. aureus strain N315.</title>
        <authorList>
            <person name="Vaezzadeh A.R."/>
            <person name="Deshusses J."/>
            <person name="Lescuyer P."/>
            <person name="Hochstrasser D.F."/>
        </authorList>
    </citation>
    <scope>IDENTIFICATION BY MASS SPECTROMETRY [LARGE SCALE ANALYSIS]</scope>
    <source>
        <strain>N315</strain>
    </source>
</reference>
<comment type="function">
    <text evidence="1">May play a role in cell wall synthesis as L-alanine is an important constituent of the peptidoglycan layer.</text>
</comment>
<comment type="catalytic activity">
    <reaction>
        <text>L-alanine + NAD(+) + H2O = pyruvate + NH4(+) + NADH + H(+)</text>
        <dbReference type="Rhea" id="RHEA:18405"/>
        <dbReference type="ChEBI" id="CHEBI:15361"/>
        <dbReference type="ChEBI" id="CHEBI:15377"/>
        <dbReference type="ChEBI" id="CHEBI:15378"/>
        <dbReference type="ChEBI" id="CHEBI:28938"/>
        <dbReference type="ChEBI" id="CHEBI:57540"/>
        <dbReference type="ChEBI" id="CHEBI:57945"/>
        <dbReference type="ChEBI" id="CHEBI:57972"/>
        <dbReference type="EC" id="1.4.1.1"/>
    </reaction>
</comment>
<comment type="pathway">
    <text>Amino-acid degradation; L-alanine degradation via dehydrogenase pathway; NH(3) and pyruvate from L-alanine: step 1/1.</text>
</comment>
<comment type="similarity">
    <text evidence="3">Belongs to the AlaDH/PNT family.</text>
</comment>
<gene>
    <name type="primary">ald1</name>
    <name type="ordered locus">SA1272</name>
</gene>
<protein>
    <recommendedName>
        <fullName>Alanine dehydrogenase 1</fullName>
        <ecNumber>1.4.1.1</ecNumber>
    </recommendedName>
</protein>
<evidence type="ECO:0000250" key="1"/>
<evidence type="ECO:0000255" key="2"/>
<evidence type="ECO:0000305" key="3"/>